<name>MDM10_AJECG</name>
<feature type="chain" id="PRO_0000384156" description="Mitochondrial distribution and morphology protein 10">
    <location>
        <begin position="1"/>
        <end position="467"/>
    </location>
</feature>
<dbReference type="EMBL" id="GG663364">
    <property type="protein sequence ID" value="EEH09943.1"/>
    <property type="molecule type" value="Genomic_DNA"/>
</dbReference>
<dbReference type="SMR" id="C0NFC2"/>
<dbReference type="FunCoup" id="C0NFC2">
    <property type="interactions" value="48"/>
</dbReference>
<dbReference type="STRING" id="447093.C0NFC2"/>
<dbReference type="VEuPathDB" id="FungiDB:I7I50_01066"/>
<dbReference type="HOGENOM" id="CLU_026505_1_0_1"/>
<dbReference type="InParanoid" id="C0NFC2"/>
<dbReference type="Proteomes" id="UP000001631">
    <property type="component" value="Unassembled WGS sequence"/>
</dbReference>
<dbReference type="GO" id="GO:0032865">
    <property type="term" value="C:ERMES complex"/>
    <property type="evidence" value="ECO:0007669"/>
    <property type="project" value="UniProtKB-UniRule"/>
</dbReference>
<dbReference type="GO" id="GO:0001401">
    <property type="term" value="C:SAM complex"/>
    <property type="evidence" value="ECO:0007669"/>
    <property type="project" value="TreeGrafter"/>
</dbReference>
<dbReference type="GO" id="GO:0051654">
    <property type="term" value="P:establishment of mitochondrion localization"/>
    <property type="evidence" value="ECO:0007669"/>
    <property type="project" value="TreeGrafter"/>
</dbReference>
<dbReference type="GO" id="GO:0000002">
    <property type="term" value="P:mitochondrial genome maintenance"/>
    <property type="evidence" value="ECO:0007669"/>
    <property type="project" value="UniProtKB-UniRule"/>
</dbReference>
<dbReference type="GO" id="GO:0070096">
    <property type="term" value="P:mitochondrial outer membrane translocase complex assembly"/>
    <property type="evidence" value="ECO:0007669"/>
    <property type="project" value="UniProtKB-UniRule"/>
</dbReference>
<dbReference type="GO" id="GO:1990456">
    <property type="term" value="P:mitochondrion-endoplasmic reticulum membrane tethering"/>
    <property type="evidence" value="ECO:0007669"/>
    <property type="project" value="UniProtKB-UniRule"/>
</dbReference>
<dbReference type="GO" id="GO:0015914">
    <property type="term" value="P:phospholipid transport"/>
    <property type="evidence" value="ECO:0007669"/>
    <property type="project" value="TreeGrafter"/>
</dbReference>
<dbReference type="GO" id="GO:0045040">
    <property type="term" value="P:protein insertion into mitochondrial outer membrane"/>
    <property type="evidence" value="ECO:0007669"/>
    <property type="project" value="UniProtKB-UniRule"/>
</dbReference>
<dbReference type="HAMAP" id="MF_03102">
    <property type="entry name" value="Mdm10"/>
    <property type="match status" value="1"/>
</dbReference>
<dbReference type="InterPro" id="IPR027539">
    <property type="entry name" value="Mdm10"/>
</dbReference>
<dbReference type="PANTHER" id="PTHR28035">
    <property type="entry name" value="MITOCHONDRIAL DISTRIBUTION AND MORPHOLOGY PROTEIN 10"/>
    <property type="match status" value="1"/>
</dbReference>
<dbReference type="PANTHER" id="PTHR28035:SF1">
    <property type="entry name" value="MITOCHONDRIAL DISTRIBUTION AND MORPHOLOGY PROTEIN 10"/>
    <property type="match status" value="1"/>
</dbReference>
<dbReference type="Pfam" id="PF12519">
    <property type="entry name" value="MDM10"/>
    <property type="match status" value="1"/>
</dbReference>
<gene>
    <name evidence="1" type="primary">MDM10</name>
    <name type="ORF">HCBG_01588</name>
</gene>
<evidence type="ECO:0000255" key="1">
    <source>
        <dbReference type="HAMAP-Rule" id="MF_03102"/>
    </source>
</evidence>
<organism>
    <name type="scientific">Ajellomyces capsulatus (strain G186AR / H82 / ATCC MYA-2454 / RMSCC 2432)</name>
    <name type="common">Darling's disease fungus</name>
    <name type="synonym">Histoplasma capsulatum</name>
    <dbReference type="NCBI Taxonomy" id="447093"/>
    <lineage>
        <taxon>Eukaryota</taxon>
        <taxon>Fungi</taxon>
        <taxon>Dikarya</taxon>
        <taxon>Ascomycota</taxon>
        <taxon>Pezizomycotina</taxon>
        <taxon>Eurotiomycetes</taxon>
        <taxon>Eurotiomycetidae</taxon>
        <taxon>Onygenales</taxon>
        <taxon>Ajellomycetaceae</taxon>
        <taxon>Histoplasma</taxon>
    </lineage>
</organism>
<keyword id="KW-0472">Membrane</keyword>
<keyword id="KW-0496">Mitochondrion</keyword>
<keyword id="KW-1000">Mitochondrion outer membrane</keyword>
<keyword id="KW-1185">Reference proteome</keyword>
<keyword id="KW-0812">Transmembrane</keyword>
<keyword id="KW-1134">Transmembrane beta strand</keyword>
<comment type="function">
    <text evidence="1">Component of the ERMES/MDM complex, which serves as a molecular tether to connect the endoplasmic reticulum and mitochondria. Components of this complex are involved in the control of mitochondrial shape and protein biogenesis and may function in phospholipid exchange. MDM10 is involved in the late assembly steps of the general translocase of the mitochondrial outer membrane (TOM complex). Functions in the TOM40-specific route of the assembly of outer membrane beta-barrel proteins, including the association of TOM40 with the receptor TOM22 and small TOM proteins. Can associate with the SAM(core) complex as well as the MDM12-MMM1 complex, both involved in late steps of the major beta-barrel assembly pathway, that is responsible for biogenesis of all outer membrane beta-barrel proteins. May act as a switch that shuttles between both complexes and channels precursor proteins into the TOM40-specific pathway. Plays a role in mitochondrial morphology and in the inheritance of mitochondria.</text>
</comment>
<comment type="subunit">
    <text evidence="1">Component of the ER-mitochondria encounter structure (ERMES) or MDM complex, composed of MMM1, MDM10, MDM12 and MDM34. Associates with the mitochondrial outer membrane sorting assembly machinery SAM(core) complex.</text>
</comment>
<comment type="subcellular location">
    <subcellularLocation>
        <location evidence="1">Mitochondrion outer membrane</location>
        <topology evidence="1">Multi-pass membrane protein</topology>
    </subcellularLocation>
    <text evidence="1">The ERMES/MDM complex localizes to a few discrete foci (around 10 per single cell), that represent mitochondria-endoplasmic reticulum junctions. These foci are often found next to mtDNA nucleoids.</text>
</comment>
<comment type="domain">
    <text>Lacks alpha-helical transmembrane segments, suggesting that it resides in the membrane via beta-sheet conformations similar to those predicted for other outer membrane proteins and porin.</text>
</comment>
<comment type="similarity">
    <text evidence="1">Belongs to the MDM10 family.</text>
</comment>
<protein>
    <recommendedName>
        <fullName evidence="1">Mitochondrial distribution and morphology protein 10</fullName>
    </recommendedName>
    <alternativeName>
        <fullName evidence="1">Mitochondrial inheritance component MDM10</fullName>
    </alternativeName>
</protein>
<proteinExistence type="inferred from homology"/>
<sequence length="467" mass="50898">MLGFLDYIQLAFSDASKWNRDNSYSQLTTTANALLDFSTPERLKVNLSSLSTPHFATTYTLGTVGLIDGSISYLFTTVPLRDTPSRSTLIPLRKLVPGYRQISAPSLPPELPTVDGRDGDLAIGETQGILKKKPTLLHATLHLPPPTTLTGLFLRRLSPTTQLSLAFCSSRASTPKSAPQAALVTQILHDTGKYSSEFLFSTDNALFGFKGLWNFGPDPRKQNQQGDLARDSRRSLLSLLSAGAEAYYSPVSSVVGLSTGLRFTTLPAATESPHFTFPYTLTLTLTPLTGSMSTTYSLLASPNVSFSSRFGFNVYSWESEMVAGCELWRRSSNNRLHDDKSQRDSALFGVDDLTWARRKMGLPDTAPSRNRECDDLPPPRYDNYYHQRSPHASDSVIKVRVDQSWNIRALWEGRVKELLVSAGVALGPTPRSSLSYASSSAVGGVGAAGGLSSYGWKSVGVSVLYSS</sequence>
<reference key="1">
    <citation type="submission" date="2009-02" db="EMBL/GenBank/DDBJ databases">
        <title>The genome sequence of Ajellomyces capsulatus strain G186AR.</title>
        <authorList>
            <person name="Champion M."/>
            <person name="Cuomo C.A."/>
            <person name="Ma L.-J."/>
            <person name="Henn M.R."/>
            <person name="Sil A."/>
            <person name="Goldman B."/>
            <person name="Young S.K."/>
            <person name="Kodira C.D."/>
            <person name="Zeng Q."/>
            <person name="Koehrsen M."/>
            <person name="Alvarado L."/>
            <person name="Berlin A."/>
            <person name="Borenstein D."/>
            <person name="Chen Z."/>
            <person name="Engels R."/>
            <person name="Freedman E."/>
            <person name="Gellesch M."/>
            <person name="Goldberg J."/>
            <person name="Griggs A."/>
            <person name="Gujja S."/>
            <person name="Heiman D."/>
            <person name="Hepburn T."/>
            <person name="Howarth C."/>
            <person name="Jen D."/>
            <person name="Larson L."/>
            <person name="Lewis B."/>
            <person name="Mehta T."/>
            <person name="Park D."/>
            <person name="Pearson M."/>
            <person name="Roberts A."/>
            <person name="Saif S."/>
            <person name="Shea T."/>
            <person name="Shenoy N."/>
            <person name="Sisk P."/>
            <person name="Stolte C."/>
            <person name="Sykes S."/>
            <person name="Walk T."/>
            <person name="White J."/>
            <person name="Yandava C."/>
            <person name="Klein B."/>
            <person name="McEwen J.G."/>
            <person name="Puccia R."/>
            <person name="Goldman G.H."/>
            <person name="Felipe M.S."/>
            <person name="Nino-Vega G."/>
            <person name="San-Blas G."/>
            <person name="Taylor J."/>
            <person name="Mendoza L."/>
            <person name="Galagan J.E."/>
            <person name="Nusbaum C."/>
            <person name="Birren B.W."/>
        </authorList>
    </citation>
    <scope>NUCLEOTIDE SEQUENCE [LARGE SCALE GENOMIC DNA]</scope>
    <source>
        <strain>G186AR / H82 / ATCC MYA-2454 / RMSCC 2432</strain>
    </source>
</reference>
<accession>C0NFC2</accession>